<proteinExistence type="evidence at transcript level"/>
<dbReference type="EC" id="2.3.1.-" evidence="9"/>
<dbReference type="EMBL" id="KU946987">
    <property type="protein sequence ID" value="AMY15072.1"/>
    <property type="molecule type" value="Genomic_DNA"/>
</dbReference>
<dbReference type="GO" id="GO:0016020">
    <property type="term" value="C:membrane"/>
    <property type="evidence" value="ECO:0007669"/>
    <property type="project" value="UniProtKB-SubCell"/>
</dbReference>
<dbReference type="GO" id="GO:0016747">
    <property type="term" value="F:acyltransferase activity, transferring groups other than amino-acyl groups"/>
    <property type="evidence" value="ECO:0007669"/>
    <property type="project" value="InterPro"/>
</dbReference>
<dbReference type="InterPro" id="IPR002656">
    <property type="entry name" value="Acyl_transf_3_dom"/>
</dbReference>
<dbReference type="InterPro" id="IPR050879">
    <property type="entry name" value="Acyltransferase_3"/>
</dbReference>
<dbReference type="PANTHER" id="PTHR23028">
    <property type="entry name" value="ACETYLTRANSFERASE"/>
    <property type="match status" value="1"/>
</dbReference>
<dbReference type="PANTHER" id="PTHR23028:SF134">
    <property type="entry name" value="PUTATIVE (AFU_ORTHOLOGUE AFUA_4G08520)-RELATED"/>
    <property type="match status" value="1"/>
</dbReference>
<dbReference type="Pfam" id="PF01757">
    <property type="entry name" value="Acyl_transf_3"/>
    <property type="match status" value="1"/>
</dbReference>
<gene>
    <name evidence="7" type="primary">R4</name>
</gene>
<organism>
    <name type="scientific">Phoma sp. (strain ATCC 20986 / MF5453)</name>
    <dbReference type="NCBI Taxonomy" id="1828523"/>
    <lineage>
        <taxon>Eukaryota</taxon>
        <taxon>Fungi</taxon>
        <taxon>Dikarya</taxon>
        <taxon>Ascomycota</taxon>
        <taxon>Pezizomycotina</taxon>
        <taxon>Dothideomycetes</taxon>
        <taxon>Pleosporomycetidae</taxon>
        <taxon>Pleosporales</taxon>
        <taxon>Pleosporineae</taxon>
        <taxon>Didymellaceae</taxon>
        <taxon>Phoma</taxon>
    </lineage>
</organism>
<sequence length="468" mass="52666">MIHKPLPRPPSSTAYIDGLRGILSIIIFNAHLTPIIILGYDNLSPPQPSPSPRNVLDIPLVASCVNNWELFTIPIVKLVYSASPAVCLFFAISGYVMSLKWVRYMSHSPTSTTTPARVFTSFGSSIFRRTLRLNLLAMASMIVPFVLVKTGFFDRTVVQRHGLTKLDRGMRFWLEQWEQFPVRRESWWEQICDLGENCARVVTVFVQRRDEAFSPRYNPVLWTIKADLRASLALSVTHLAMLGISRRSRQCFLAALVVMGIAVGSLECPLFWAGWIVAEIHHPAEQRTLKQRKSAEMPMQKTSRRGPDPFGKAVVLAIGCYFASYPTWKPEKAPMFTVLHTIVPDVVVPPRTWHSIGAILILYSLRDVPLARRVCESSIAQFLGTHSFAVYLVHFCLVISFGPGLFSWAWGVSGYEDLRSFAIGFGIAYAVLFIGVLLAAAMFHQFVEKPANKCVERLYRLSSVEQDV</sequence>
<accession>A0A3G1DJH6</accession>
<keyword id="KW-0012">Acyltransferase</keyword>
<keyword id="KW-0472">Membrane</keyword>
<keyword id="KW-0808">Transferase</keyword>
<keyword id="KW-0812">Transmembrane</keyword>
<keyword id="KW-1133">Transmembrane helix</keyword>
<reference key="1">
    <citation type="journal article" date="2016" name="Chem. Commun. (Camb.)">
        <title>Identification of genes encoding squalestatin S1 biosynthesis and in vitro production of new squalestatin analogues.</title>
        <authorList>
            <person name="Bonsch B."/>
            <person name="Belt V."/>
            <person name="Bartel C."/>
            <person name="Duensing N."/>
            <person name="Koziol M."/>
            <person name="Lazarus C.M."/>
            <person name="Bailey A.M."/>
            <person name="Simpson T.J."/>
            <person name="Cox R.J."/>
        </authorList>
    </citation>
    <scope>NUCLEOTIDE SEQUENCE [GENOMIC DNA]</scope>
    <scope>FUNCTION</scope>
    <scope>INDUCTION</scope>
</reference>
<reference key="2">
    <citation type="journal article" date="2001" name="Chem. Biol.">
        <title>Design and utility of oligonucleotide gene probes for fungal polyketide synthases.</title>
        <authorList>
            <person name="Nicholson T.P."/>
            <person name="Rudd B.A."/>
            <person name="Dawson M."/>
            <person name="Lazarus C.M."/>
            <person name="Simpson T.J."/>
            <person name="Cox R.J."/>
        </authorList>
    </citation>
    <scope>FUNCTION</scope>
</reference>
<reference key="3">
    <citation type="journal article" date="2004" name="Chem. Commun. (Camb.)">
        <title>Rapid cloning and expression of a fungal polyketide synthase gene involved in squalestatin biosynthesis.</title>
        <authorList>
            <person name="Cox R.J."/>
            <person name="Glod F."/>
            <person name="Hurley D."/>
            <person name="Lazarus C.M."/>
            <person name="Nicholson T.P."/>
            <person name="Rudd B.A."/>
            <person name="Simpson T.J."/>
            <person name="Wilkinson B."/>
            <person name="Zhang Y."/>
        </authorList>
    </citation>
    <scope>FUNCTION</scope>
</reference>
<reference key="4">
    <citation type="journal article" date="2017" name="Chem. Commun. (Camb.)">
        <title>In vitro kinetic study of the squalestatin tetraketide synthase dehydratase reveals the stereochemical course of a fungal highly reducing polyketide synthase.</title>
        <authorList>
            <person name="Liddle E."/>
            <person name="Scott A."/>
            <person name="Han L.C."/>
            <person name="Ivison D."/>
            <person name="Simpson T.J."/>
            <person name="Willis C.L."/>
            <person name="Cox R.J."/>
        </authorList>
    </citation>
    <scope>FUNCTION</scope>
</reference>
<name>MFR4_PHOSM</name>
<comment type="function">
    <text evidence="1 3 4 5 6 9">Acyltransferase; part of the gene cluster that mediates the biosynthesis of squalestatin S1 (SQS1, also known as zaragozic acid A), a heavily oxidized fungal polyketide that offers potent cholesterol lowering activity by targeting squalene synthase (SS) (PubMed:27056201). SQS1 is composed of a 2,8-dioxobicyclic[3.2.1]octane-3,4,5-tricarboxyclic acid core that is connected to two lipophilic polyketide arms (PubMed:27056201). These initial steps feature the priming of an unusual benzoic acid starter unit onto the highly reducing polyketide synthase pks2, followed by oxaloacetate extension and product release to generate a tricarboxylic acid containing product (By similarity). The phenylalanine ammonia lyase (PAL) M7 and the acyl-CoA ligase M9 are involved in transforming phenylalanine into benzoyl-CoA (By similarity). The citrate synthase-like protein R3 is involved in connecting the C-alpha-carbons of the hexaketide chain and oxaloacetate to afford the tricarboxylic acid unit (By similarity). The potential hydrolytic enzymes, M8 and M10, are in close proximity to pks2 and may participate in product release (By similarity). On the other side, the tetraketide arm is synthesized by a the squalestatin tetraketide synthase pks1 and enzymatically esterified to the core in the last biosynthetic step, by the acetyltransferase M4 (PubMed:11251290, PubMed:15489970, PubMed:28106181). The biosynthesis of the tetraketide must involve 3 rounds of chain extension (PubMed:11251290, PubMed:15489970, PubMed:28106181). After the first and second rounds methyl-transfer occurs, and in all rounds of extension the ketoreductase and dehydratase are active (PubMed:11251290, PubMed:15489970, PubMed:28106181). The enoyl reductase and C-MeT of pks1 are not active in the final round of extension (PubMed:11251290, PubMed:15489970, PubMed:28106181). The acetyltransferase M4 appears to have a broad substrate selectivity for its acyl CoA substrate, allowing the in vitro synthesis of novel squalestatins (Probable). The biosynthesis of SQS1 requires several oxidative steps likely performed by oxidoreductases M1, R1 and R2 (Probable). Finally, in support of the identification of the cluster as being responsible for SQS1 production, the cluster contains a gene encoding a putative squalene synthase (SS) R6, suggesting a likely mechanism for self-resistance (Probable).</text>
</comment>
<comment type="pathway">
    <text evidence="9">Secondary metabolite biosynthesis.</text>
</comment>
<comment type="subcellular location">
    <subcellularLocation>
        <location evidence="2">Membrane</location>
        <topology evidence="2">Multi-pass membrane protein</topology>
    </subcellularLocation>
</comment>
<comment type="induction">
    <text evidence="5">Expression is induced on squalestatin S1-producing YMG medium.</text>
</comment>
<comment type="similarity">
    <text evidence="8">Belongs to the acyltransferase 3 family.</text>
</comment>
<feature type="chain" id="PRO_0000447842" description="Acyltransferase R4">
    <location>
        <begin position="1"/>
        <end position="468"/>
    </location>
</feature>
<feature type="transmembrane region" description="Helical" evidence="2">
    <location>
        <begin position="21"/>
        <end position="41"/>
    </location>
</feature>
<feature type="transmembrane region" description="Helical" evidence="2">
    <location>
        <begin position="70"/>
        <end position="90"/>
    </location>
</feature>
<feature type="transmembrane region" description="Helical" evidence="2">
    <location>
        <begin position="133"/>
        <end position="153"/>
    </location>
</feature>
<feature type="transmembrane region" description="Helical" evidence="2">
    <location>
        <begin position="252"/>
        <end position="272"/>
    </location>
</feature>
<feature type="transmembrane region" description="Helical" evidence="2">
    <location>
        <begin position="308"/>
        <end position="328"/>
    </location>
</feature>
<feature type="transmembrane region" description="Helical" evidence="2">
    <location>
        <begin position="388"/>
        <end position="408"/>
    </location>
</feature>
<feature type="transmembrane region" description="Helical" evidence="2">
    <location>
        <begin position="423"/>
        <end position="443"/>
    </location>
</feature>
<evidence type="ECO:0000250" key="1">
    <source>
        <dbReference type="UniProtKB" id="A0A345BJP8"/>
    </source>
</evidence>
<evidence type="ECO:0000255" key="2"/>
<evidence type="ECO:0000269" key="3">
    <source>
    </source>
</evidence>
<evidence type="ECO:0000269" key="4">
    <source>
    </source>
</evidence>
<evidence type="ECO:0000269" key="5">
    <source>
    </source>
</evidence>
<evidence type="ECO:0000269" key="6">
    <source>
    </source>
</evidence>
<evidence type="ECO:0000303" key="7">
    <source>
    </source>
</evidence>
<evidence type="ECO:0000305" key="8"/>
<evidence type="ECO:0000305" key="9">
    <source>
    </source>
</evidence>
<protein>
    <recommendedName>
        <fullName evidence="7">Acyltransferase R4</fullName>
        <shortName evidence="7">AT R4</shortName>
        <ecNumber evidence="9">2.3.1.-</ecNumber>
    </recommendedName>
    <alternativeName>
        <fullName evidence="7">Squalestatin S1 biosynthesis cluster protein R4</fullName>
    </alternativeName>
</protein>